<geneLocation type="chloroplast"/>
<accession>A4QK38</accession>
<dbReference type="EMBL" id="AP009369">
    <property type="protein sequence ID" value="BAF50043.1"/>
    <property type="molecule type" value="Genomic_DNA"/>
</dbReference>
<dbReference type="RefSeq" id="YP_001123219.1">
    <property type="nucleotide sequence ID" value="NC_009268.1"/>
</dbReference>
<dbReference type="SMR" id="A4QK38"/>
<dbReference type="GeneID" id="4962591"/>
<dbReference type="GO" id="GO:0009535">
    <property type="term" value="C:chloroplast thylakoid membrane"/>
    <property type="evidence" value="ECO:0007669"/>
    <property type="project" value="UniProtKB-SubCell"/>
</dbReference>
<dbReference type="GO" id="GO:0009522">
    <property type="term" value="C:photosystem I"/>
    <property type="evidence" value="ECO:0007669"/>
    <property type="project" value="UniProtKB-KW"/>
</dbReference>
<dbReference type="GO" id="GO:0015979">
    <property type="term" value="P:photosynthesis"/>
    <property type="evidence" value="ECO:0007669"/>
    <property type="project" value="UniProtKB-UniRule"/>
</dbReference>
<dbReference type="FunFam" id="1.20.5.510:FF:000001">
    <property type="entry name" value="Photosystem I reaction center subunit IX"/>
    <property type="match status" value="1"/>
</dbReference>
<dbReference type="Gene3D" id="1.20.5.510">
    <property type="entry name" value="Single helix bin"/>
    <property type="match status" value="1"/>
</dbReference>
<dbReference type="HAMAP" id="MF_00522">
    <property type="entry name" value="PSI_PsaJ"/>
    <property type="match status" value="1"/>
</dbReference>
<dbReference type="InterPro" id="IPR002615">
    <property type="entry name" value="PSI_PsaJ"/>
</dbReference>
<dbReference type="InterPro" id="IPR036062">
    <property type="entry name" value="PSI_PsaJ_sf"/>
</dbReference>
<dbReference type="PANTHER" id="PTHR36082">
    <property type="match status" value="1"/>
</dbReference>
<dbReference type="PANTHER" id="PTHR36082:SF2">
    <property type="entry name" value="PHOTOSYSTEM I REACTION CENTER SUBUNIT IX"/>
    <property type="match status" value="1"/>
</dbReference>
<dbReference type="Pfam" id="PF01701">
    <property type="entry name" value="PSI_PsaJ"/>
    <property type="match status" value="1"/>
</dbReference>
<dbReference type="SUPFAM" id="SSF81544">
    <property type="entry name" value="Subunit IX of photosystem I reaction centre, PsaJ"/>
    <property type="match status" value="1"/>
</dbReference>
<evidence type="ECO:0000255" key="1">
    <source>
        <dbReference type="HAMAP-Rule" id="MF_00522"/>
    </source>
</evidence>
<name>PSAJ_ARAHI</name>
<organism>
    <name type="scientific">Arabis hirsuta</name>
    <name type="common">Hairy rock-cress</name>
    <name type="synonym">Turritis hirsuta</name>
    <dbReference type="NCBI Taxonomy" id="78191"/>
    <lineage>
        <taxon>Eukaryota</taxon>
        <taxon>Viridiplantae</taxon>
        <taxon>Streptophyta</taxon>
        <taxon>Embryophyta</taxon>
        <taxon>Tracheophyta</taxon>
        <taxon>Spermatophyta</taxon>
        <taxon>Magnoliopsida</taxon>
        <taxon>eudicotyledons</taxon>
        <taxon>Gunneridae</taxon>
        <taxon>Pentapetalae</taxon>
        <taxon>rosids</taxon>
        <taxon>malvids</taxon>
        <taxon>Brassicales</taxon>
        <taxon>Brassicaceae</taxon>
        <taxon>Arabideae</taxon>
        <taxon>Arabis</taxon>
    </lineage>
</organism>
<feature type="chain" id="PRO_0000354129" description="Photosystem I reaction center subunit IX">
    <location>
        <begin position="1"/>
        <end position="44"/>
    </location>
</feature>
<feature type="transmembrane region" description="Helical" evidence="1">
    <location>
        <begin position="7"/>
        <end position="27"/>
    </location>
</feature>
<gene>
    <name evidence="1" type="primary">psaJ</name>
</gene>
<reference key="1">
    <citation type="submission" date="2007-03" db="EMBL/GenBank/DDBJ databases">
        <title>Sequencing analysis of Arabis hirsuta chloroplast DNA.</title>
        <authorList>
            <person name="Hosouchi T."/>
            <person name="Tsuruoka H."/>
            <person name="Kotani H."/>
        </authorList>
    </citation>
    <scope>NUCLEOTIDE SEQUENCE [LARGE SCALE GENOMIC DNA]</scope>
</reference>
<sequence length="44" mass="5009">MRDLKTYLSVAPVLSTLWFGSLAGLLIEINRLFPDALTFPFFSF</sequence>
<comment type="function">
    <text evidence="1">May help in the organization of the PsaE and PsaF subunits.</text>
</comment>
<comment type="subcellular location">
    <subcellularLocation>
        <location evidence="1">Plastid</location>
        <location evidence="1">Chloroplast thylakoid membrane</location>
        <topology evidence="1">Single-pass membrane protein</topology>
    </subcellularLocation>
</comment>
<comment type="similarity">
    <text evidence="1">Belongs to the PsaJ family.</text>
</comment>
<proteinExistence type="inferred from homology"/>
<keyword id="KW-0150">Chloroplast</keyword>
<keyword id="KW-0472">Membrane</keyword>
<keyword id="KW-0602">Photosynthesis</keyword>
<keyword id="KW-0603">Photosystem I</keyword>
<keyword id="KW-0934">Plastid</keyword>
<keyword id="KW-0793">Thylakoid</keyword>
<keyword id="KW-0812">Transmembrane</keyword>
<keyword id="KW-1133">Transmembrane helix</keyword>
<protein>
    <recommendedName>
        <fullName evidence="1">Photosystem I reaction center subunit IX</fullName>
    </recommendedName>
    <alternativeName>
        <fullName evidence="1">PSI-J</fullName>
    </alternativeName>
</protein>